<name>MTGA_PSEPG</name>
<evidence type="ECO:0000255" key="1">
    <source>
        <dbReference type="HAMAP-Rule" id="MF_00766"/>
    </source>
</evidence>
<dbReference type="EC" id="2.4.99.28" evidence="1"/>
<dbReference type="EMBL" id="CP000926">
    <property type="protein sequence ID" value="ABZ01042.1"/>
    <property type="molecule type" value="Genomic_DNA"/>
</dbReference>
<dbReference type="RefSeq" id="WP_012274656.1">
    <property type="nucleotide sequence ID" value="NC_010322.1"/>
</dbReference>
<dbReference type="SMR" id="B0KN61"/>
<dbReference type="CAZy" id="GT51">
    <property type="family name" value="Glycosyltransferase Family 51"/>
</dbReference>
<dbReference type="KEGG" id="ppg:PputGB1_5157"/>
<dbReference type="eggNOG" id="COG0744">
    <property type="taxonomic scope" value="Bacteria"/>
</dbReference>
<dbReference type="HOGENOM" id="CLU_006354_1_1_6"/>
<dbReference type="UniPathway" id="UPA00219"/>
<dbReference type="Proteomes" id="UP000002157">
    <property type="component" value="Chromosome"/>
</dbReference>
<dbReference type="GO" id="GO:0009274">
    <property type="term" value="C:peptidoglycan-based cell wall"/>
    <property type="evidence" value="ECO:0007669"/>
    <property type="project" value="InterPro"/>
</dbReference>
<dbReference type="GO" id="GO:0005886">
    <property type="term" value="C:plasma membrane"/>
    <property type="evidence" value="ECO:0007669"/>
    <property type="project" value="UniProtKB-SubCell"/>
</dbReference>
<dbReference type="GO" id="GO:0016763">
    <property type="term" value="F:pentosyltransferase activity"/>
    <property type="evidence" value="ECO:0007669"/>
    <property type="project" value="InterPro"/>
</dbReference>
<dbReference type="GO" id="GO:0008955">
    <property type="term" value="F:peptidoglycan glycosyltransferase activity"/>
    <property type="evidence" value="ECO:0007669"/>
    <property type="project" value="UniProtKB-UniRule"/>
</dbReference>
<dbReference type="GO" id="GO:0071555">
    <property type="term" value="P:cell wall organization"/>
    <property type="evidence" value="ECO:0007669"/>
    <property type="project" value="UniProtKB-KW"/>
</dbReference>
<dbReference type="GO" id="GO:0009252">
    <property type="term" value="P:peptidoglycan biosynthetic process"/>
    <property type="evidence" value="ECO:0007669"/>
    <property type="project" value="UniProtKB-UniRule"/>
</dbReference>
<dbReference type="GO" id="GO:0008360">
    <property type="term" value="P:regulation of cell shape"/>
    <property type="evidence" value="ECO:0007669"/>
    <property type="project" value="UniProtKB-KW"/>
</dbReference>
<dbReference type="Gene3D" id="1.10.3810.10">
    <property type="entry name" value="Biosynthetic peptidoglycan transglycosylase-like"/>
    <property type="match status" value="1"/>
</dbReference>
<dbReference type="HAMAP" id="MF_00766">
    <property type="entry name" value="PGT_MtgA"/>
    <property type="match status" value="1"/>
</dbReference>
<dbReference type="InterPro" id="IPR001264">
    <property type="entry name" value="Glyco_trans_51"/>
</dbReference>
<dbReference type="InterPro" id="IPR023346">
    <property type="entry name" value="Lysozyme-like_dom_sf"/>
</dbReference>
<dbReference type="InterPro" id="IPR036950">
    <property type="entry name" value="PBP_transglycosylase"/>
</dbReference>
<dbReference type="InterPro" id="IPR011812">
    <property type="entry name" value="Pep_trsgly"/>
</dbReference>
<dbReference type="NCBIfam" id="TIGR02070">
    <property type="entry name" value="mono_pep_trsgly"/>
    <property type="match status" value="1"/>
</dbReference>
<dbReference type="PANTHER" id="PTHR30400:SF0">
    <property type="entry name" value="BIOSYNTHETIC PEPTIDOGLYCAN TRANSGLYCOSYLASE"/>
    <property type="match status" value="1"/>
</dbReference>
<dbReference type="PANTHER" id="PTHR30400">
    <property type="entry name" value="MONOFUNCTIONAL BIOSYNTHETIC PEPTIDOGLYCAN TRANSGLYCOSYLASE"/>
    <property type="match status" value="1"/>
</dbReference>
<dbReference type="Pfam" id="PF00912">
    <property type="entry name" value="Transgly"/>
    <property type="match status" value="1"/>
</dbReference>
<dbReference type="SUPFAM" id="SSF53955">
    <property type="entry name" value="Lysozyme-like"/>
    <property type="match status" value="1"/>
</dbReference>
<feature type="chain" id="PRO_1000083541" description="Biosynthetic peptidoglycan transglycosylase">
    <location>
        <begin position="1"/>
        <end position="236"/>
    </location>
</feature>
<feature type="transmembrane region" description="Helical" evidence="1">
    <location>
        <begin position="12"/>
        <end position="31"/>
    </location>
</feature>
<reference key="1">
    <citation type="submission" date="2008-01" db="EMBL/GenBank/DDBJ databases">
        <title>Complete sequence of Pseudomonas putida GB-1.</title>
        <authorList>
            <consortium name="US DOE Joint Genome Institute"/>
            <person name="Copeland A."/>
            <person name="Lucas S."/>
            <person name="Lapidus A."/>
            <person name="Barry K."/>
            <person name="Glavina del Rio T."/>
            <person name="Dalin E."/>
            <person name="Tice H."/>
            <person name="Pitluck S."/>
            <person name="Bruce D."/>
            <person name="Goodwin L."/>
            <person name="Chertkov O."/>
            <person name="Brettin T."/>
            <person name="Detter J.C."/>
            <person name="Han C."/>
            <person name="Kuske C.R."/>
            <person name="Schmutz J."/>
            <person name="Larimer F."/>
            <person name="Land M."/>
            <person name="Hauser L."/>
            <person name="Kyrpides N."/>
            <person name="Kim E."/>
            <person name="McCarthy J.K."/>
            <person name="Richardson P."/>
        </authorList>
    </citation>
    <scope>NUCLEOTIDE SEQUENCE [LARGE SCALE GENOMIC DNA]</scope>
    <source>
        <strain>GB-1</strain>
    </source>
</reference>
<keyword id="KW-0997">Cell inner membrane</keyword>
<keyword id="KW-1003">Cell membrane</keyword>
<keyword id="KW-0133">Cell shape</keyword>
<keyword id="KW-0961">Cell wall biogenesis/degradation</keyword>
<keyword id="KW-0328">Glycosyltransferase</keyword>
<keyword id="KW-0472">Membrane</keyword>
<keyword id="KW-0573">Peptidoglycan synthesis</keyword>
<keyword id="KW-0808">Transferase</keyword>
<keyword id="KW-0812">Transmembrane</keyword>
<keyword id="KW-1133">Transmembrane helix</keyword>
<proteinExistence type="inferred from homology"/>
<protein>
    <recommendedName>
        <fullName evidence="1">Biosynthetic peptidoglycan transglycosylase</fullName>
        <ecNumber evidence="1">2.4.99.28</ecNumber>
    </recommendedName>
    <alternativeName>
        <fullName evidence="1">Glycan polymerase</fullName>
    </alternativeName>
    <alternativeName>
        <fullName evidence="1">Peptidoglycan glycosyltransferase MtgA</fullName>
        <shortName evidence="1">PGT</shortName>
    </alternativeName>
</protein>
<gene>
    <name evidence="1" type="primary">mtgA</name>
    <name type="ordered locus">PputGB1_5157</name>
</gene>
<organism>
    <name type="scientific">Pseudomonas putida (strain GB-1)</name>
    <dbReference type="NCBI Taxonomy" id="76869"/>
    <lineage>
        <taxon>Bacteria</taxon>
        <taxon>Pseudomonadati</taxon>
        <taxon>Pseudomonadota</taxon>
        <taxon>Gammaproteobacteria</taxon>
        <taxon>Pseudomonadales</taxon>
        <taxon>Pseudomonadaceae</taxon>
        <taxon>Pseudomonas</taxon>
    </lineage>
</organism>
<accession>B0KN61</accession>
<sequence>MLPTLIRRLSRALLWFAASSIVLVLVFRWVPPPGTALMVERKVQSWVNGEPIDLQRDWEPWENISDELKVAVIAGEDQKFASHWGFDIPAIQAALAYNERGGNVRGASTLTQQVAKNLFLWSGRSWFRKGLEAWFTALIELFWSKERILEVYLNSAEWGKGVFGAQAAARYHFGVDASRLSRQQAAQLAAVLPSPIKWSASRPSAYVASRAGWIRRQMSQLGGPSYLMQLDTSRKL</sequence>
<comment type="function">
    <text evidence="1">Peptidoglycan polymerase that catalyzes glycan chain elongation from lipid-linked precursors.</text>
</comment>
<comment type="catalytic activity">
    <reaction evidence="1">
        <text>[GlcNAc-(1-&gt;4)-Mur2Ac(oyl-L-Ala-gamma-D-Glu-L-Lys-D-Ala-D-Ala)](n)-di-trans,octa-cis-undecaprenyl diphosphate + beta-D-GlcNAc-(1-&gt;4)-Mur2Ac(oyl-L-Ala-gamma-D-Glu-L-Lys-D-Ala-D-Ala)-di-trans,octa-cis-undecaprenyl diphosphate = [GlcNAc-(1-&gt;4)-Mur2Ac(oyl-L-Ala-gamma-D-Glu-L-Lys-D-Ala-D-Ala)](n+1)-di-trans,octa-cis-undecaprenyl diphosphate + di-trans,octa-cis-undecaprenyl diphosphate + H(+)</text>
        <dbReference type="Rhea" id="RHEA:23708"/>
        <dbReference type="Rhea" id="RHEA-COMP:9602"/>
        <dbReference type="Rhea" id="RHEA-COMP:9603"/>
        <dbReference type="ChEBI" id="CHEBI:15378"/>
        <dbReference type="ChEBI" id="CHEBI:58405"/>
        <dbReference type="ChEBI" id="CHEBI:60033"/>
        <dbReference type="ChEBI" id="CHEBI:78435"/>
        <dbReference type="EC" id="2.4.99.28"/>
    </reaction>
</comment>
<comment type="pathway">
    <text evidence="1">Cell wall biogenesis; peptidoglycan biosynthesis.</text>
</comment>
<comment type="subcellular location">
    <subcellularLocation>
        <location evidence="1">Cell inner membrane</location>
        <topology evidence="1">Single-pass membrane protein</topology>
    </subcellularLocation>
</comment>
<comment type="similarity">
    <text evidence="1">Belongs to the glycosyltransferase 51 family.</text>
</comment>